<protein>
    <recommendedName>
        <fullName evidence="1">LPS-assembly lipoprotein LptE</fullName>
    </recommendedName>
</protein>
<name>LPTE_ESCF3</name>
<accession>B7LLH2</accession>
<comment type="function">
    <text evidence="1">Together with LptD, is involved in the assembly of lipopolysaccharide (LPS) at the surface of the outer membrane. Required for the proper assembly of LptD. Binds LPS and may serve as the LPS recognition site at the outer membrane.</text>
</comment>
<comment type="subunit">
    <text evidence="1">Component of the lipopolysaccharide transport and assembly complex. Interacts with LptD.</text>
</comment>
<comment type="subcellular location">
    <subcellularLocation>
        <location evidence="1">Cell outer membrane</location>
        <topology evidence="1">Lipid-anchor</topology>
    </subcellularLocation>
</comment>
<comment type="similarity">
    <text evidence="1">Belongs to the LptE lipoprotein family.</text>
</comment>
<gene>
    <name evidence="1" type="primary">lptE</name>
    <name type="synonym">rlpB</name>
    <name type="ordered locus">EFER_2465</name>
</gene>
<dbReference type="EMBL" id="CU928158">
    <property type="protein sequence ID" value="CAQ89962.1"/>
    <property type="molecule type" value="Genomic_DNA"/>
</dbReference>
<dbReference type="RefSeq" id="WP_001269681.1">
    <property type="nucleotide sequence ID" value="NC_011740.1"/>
</dbReference>
<dbReference type="SMR" id="B7LLH2"/>
<dbReference type="GeneID" id="75056499"/>
<dbReference type="KEGG" id="efe:EFER_2465"/>
<dbReference type="HOGENOM" id="CLU_103309_1_1_6"/>
<dbReference type="OrthoDB" id="5801564at2"/>
<dbReference type="Proteomes" id="UP000000745">
    <property type="component" value="Chromosome"/>
</dbReference>
<dbReference type="GO" id="GO:0009279">
    <property type="term" value="C:cell outer membrane"/>
    <property type="evidence" value="ECO:0007669"/>
    <property type="project" value="UniProtKB-SubCell"/>
</dbReference>
<dbReference type="GO" id="GO:1990351">
    <property type="term" value="C:transporter complex"/>
    <property type="evidence" value="ECO:0007669"/>
    <property type="project" value="TreeGrafter"/>
</dbReference>
<dbReference type="GO" id="GO:0001530">
    <property type="term" value="F:lipopolysaccharide binding"/>
    <property type="evidence" value="ECO:0007669"/>
    <property type="project" value="TreeGrafter"/>
</dbReference>
<dbReference type="GO" id="GO:0043165">
    <property type="term" value="P:Gram-negative-bacterium-type cell outer membrane assembly"/>
    <property type="evidence" value="ECO:0007669"/>
    <property type="project" value="UniProtKB-UniRule"/>
</dbReference>
<dbReference type="GO" id="GO:0015920">
    <property type="term" value="P:lipopolysaccharide transport"/>
    <property type="evidence" value="ECO:0007669"/>
    <property type="project" value="TreeGrafter"/>
</dbReference>
<dbReference type="FunFam" id="3.30.160.150:FF:000001">
    <property type="entry name" value="LPS-assembly lipoprotein LptE"/>
    <property type="match status" value="1"/>
</dbReference>
<dbReference type="Gene3D" id="3.30.160.150">
    <property type="entry name" value="Lipoprotein like domain"/>
    <property type="match status" value="1"/>
</dbReference>
<dbReference type="HAMAP" id="MF_01186">
    <property type="entry name" value="LPS_assembly_LptE"/>
    <property type="match status" value="1"/>
</dbReference>
<dbReference type="InterPro" id="IPR007485">
    <property type="entry name" value="LPS_assembly_LptE"/>
</dbReference>
<dbReference type="NCBIfam" id="NF008062">
    <property type="entry name" value="PRK10796.1"/>
    <property type="match status" value="1"/>
</dbReference>
<dbReference type="PANTHER" id="PTHR38098">
    <property type="entry name" value="LPS-ASSEMBLY LIPOPROTEIN LPTE"/>
    <property type="match status" value="1"/>
</dbReference>
<dbReference type="PANTHER" id="PTHR38098:SF1">
    <property type="entry name" value="LPS-ASSEMBLY LIPOPROTEIN LPTE"/>
    <property type="match status" value="1"/>
</dbReference>
<dbReference type="Pfam" id="PF04390">
    <property type="entry name" value="LptE"/>
    <property type="match status" value="1"/>
</dbReference>
<dbReference type="PROSITE" id="PS51257">
    <property type="entry name" value="PROKAR_LIPOPROTEIN"/>
    <property type="match status" value="1"/>
</dbReference>
<organism>
    <name type="scientific">Escherichia fergusonii (strain ATCC 35469 / DSM 13698 / CCUG 18766 / IAM 14443 / JCM 21226 / LMG 7866 / NBRC 102419 / NCTC 12128 / CDC 0568-73)</name>
    <dbReference type="NCBI Taxonomy" id="585054"/>
    <lineage>
        <taxon>Bacteria</taxon>
        <taxon>Pseudomonadati</taxon>
        <taxon>Pseudomonadota</taxon>
        <taxon>Gammaproteobacteria</taxon>
        <taxon>Enterobacterales</taxon>
        <taxon>Enterobacteriaceae</taxon>
        <taxon>Escherichia</taxon>
    </lineage>
</organism>
<proteinExistence type="inferred from homology"/>
<sequence length="193" mass="21356">MRYLATLLLSLAVLITAGCGWHLRDTTQVPSTMKVMILDSGDPNGPLSRAVRNQLRLNGVELLNKETTRKDVPSLRLGKVSIAKDTASVFRNGQTAEYQMIMTVNATVLIPGRDIYPISAKVFRSFFDNPQMALAKDNEQDMIVKEMYDRAAEQLIRKLPSIRAADIRSDEEQTSTTTDTPATPARVSTTLGN</sequence>
<feature type="signal peptide" evidence="1">
    <location>
        <begin position="1"/>
        <end position="18"/>
    </location>
</feature>
<feature type="chain" id="PRO_1000138273" description="LPS-assembly lipoprotein LptE">
    <location>
        <begin position="19"/>
        <end position="193"/>
    </location>
</feature>
<feature type="region of interest" description="Disordered" evidence="2">
    <location>
        <begin position="166"/>
        <end position="193"/>
    </location>
</feature>
<feature type="compositionally biased region" description="Low complexity" evidence="2">
    <location>
        <begin position="174"/>
        <end position="186"/>
    </location>
</feature>
<feature type="lipid moiety-binding region" description="N-palmitoyl cysteine" evidence="1">
    <location>
        <position position="19"/>
    </location>
</feature>
<feature type="lipid moiety-binding region" description="S-diacylglycerol cysteine" evidence="1">
    <location>
        <position position="19"/>
    </location>
</feature>
<evidence type="ECO:0000255" key="1">
    <source>
        <dbReference type="HAMAP-Rule" id="MF_01186"/>
    </source>
</evidence>
<evidence type="ECO:0000256" key="2">
    <source>
        <dbReference type="SAM" id="MobiDB-lite"/>
    </source>
</evidence>
<reference key="1">
    <citation type="journal article" date="2009" name="PLoS Genet.">
        <title>Organised genome dynamics in the Escherichia coli species results in highly diverse adaptive paths.</title>
        <authorList>
            <person name="Touchon M."/>
            <person name="Hoede C."/>
            <person name="Tenaillon O."/>
            <person name="Barbe V."/>
            <person name="Baeriswyl S."/>
            <person name="Bidet P."/>
            <person name="Bingen E."/>
            <person name="Bonacorsi S."/>
            <person name="Bouchier C."/>
            <person name="Bouvet O."/>
            <person name="Calteau A."/>
            <person name="Chiapello H."/>
            <person name="Clermont O."/>
            <person name="Cruveiller S."/>
            <person name="Danchin A."/>
            <person name="Diard M."/>
            <person name="Dossat C."/>
            <person name="Karoui M.E."/>
            <person name="Frapy E."/>
            <person name="Garry L."/>
            <person name="Ghigo J.M."/>
            <person name="Gilles A.M."/>
            <person name="Johnson J."/>
            <person name="Le Bouguenec C."/>
            <person name="Lescat M."/>
            <person name="Mangenot S."/>
            <person name="Martinez-Jehanne V."/>
            <person name="Matic I."/>
            <person name="Nassif X."/>
            <person name="Oztas S."/>
            <person name="Petit M.A."/>
            <person name="Pichon C."/>
            <person name="Rouy Z."/>
            <person name="Ruf C.S."/>
            <person name="Schneider D."/>
            <person name="Tourret J."/>
            <person name="Vacherie B."/>
            <person name="Vallenet D."/>
            <person name="Medigue C."/>
            <person name="Rocha E.P.C."/>
            <person name="Denamur E."/>
        </authorList>
    </citation>
    <scope>NUCLEOTIDE SEQUENCE [LARGE SCALE GENOMIC DNA]</scope>
    <source>
        <strain>ATCC 35469 / DSM 13698 / BCRC 15582 / CCUG 18766 / IAM 14443 / JCM 21226 / LMG 7866 / NBRC 102419 / NCTC 12128 / CDC 0568-73</strain>
    </source>
</reference>
<keyword id="KW-0998">Cell outer membrane</keyword>
<keyword id="KW-0449">Lipoprotein</keyword>
<keyword id="KW-0472">Membrane</keyword>
<keyword id="KW-0564">Palmitate</keyword>
<keyword id="KW-0732">Signal</keyword>